<comment type="function">
    <text evidence="1">Attaches a formyl group to the free amino group of methionyl-tRNA(fMet). The formyl group appears to play a dual role in the initiator identity of N-formylmethionyl-tRNA by promoting its recognition by IF2 and preventing the misappropriation of this tRNA by the elongation apparatus.</text>
</comment>
<comment type="catalytic activity">
    <reaction evidence="1">
        <text>L-methionyl-tRNA(fMet) + (6R)-10-formyltetrahydrofolate = N-formyl-L-methionyl-tRNA(fMet) + (6S)-5,6,7,8-tetrahydrofolate + H(+)</text>
        <dbReference type="Rhea" id="RHEA:24380"/>
        <dbReference type="Rhea" id="RHEA-COMP:9952"/>
        <dbReference type="Rhea" id="RHEA-COMP:9953"/>
        <dbReference type="ChEBI" id="CHEBI:15378"/>
        <dbReference type="ChEBI" id="CHEBI:57453"/>
        <dbReference type="ChEBI" id="CHEBI:78530"/>
        <dbReference type="ChEBI" id="CHEBI:78844"/>
        <dbReference type="ChEBI" id="CHEBI:195366"/>
        <dbReference type="EC" id="2.1.2.9"/>
    </reaction>
</comment>
<comment type="similarity">
    <text evidence="1">Belongs to the Fmt family.</text>
</comment>
<protein>
    <recommendedName>
        <fullName evidence="1">Methionyl-tRNA formyltransferase</fullName>
        <ecNumber evidence="1">2.1.2.9</ecNumber>
    </recommendedName>
</protein>
<keyword id="KW-0648">Protein biosynthesis</keyword>
<keyword id="KW-0808">Transferase</keyword>
<evidence type="ECO:0000255" key="1">
    <source>
        <dbReference type="HAMAP-Rule" id="MF_00182"/>
    </source>
</evidence>
<sequence>MSESLRIIFAGTPDFAARHLDALLSSGHNVVGVFTQPDRPAGRGKKLMPSPVKVLAEEKGLPVFQPVSLRPQENQQLVADLQADVMVVVAYGLILPKAVLEMPRLGCINVHGSLLPRWRGAAPIQRSLWAGDAETGVTIMQMDVGLDTGDMLYKLSCPITAEDTSGTLYDKLAELGPQGLITTLKQLADGTAKPEVQDETLVTYAEKLSKEEARIDWSLSAAQLERCIRAFNPWPMSWVEIEGQPVKVWKASVIDTATNAAPGTILEANKQGIQVATGDGILNLLSLQPAGKKAMSAQDLLNSRREWFVPGNRLV</sequence>
<proteinExistence type="inferred from homology"/>
<accession>B5YT07</accession>
<dbReference type="EC" id="2.1.2.9" evidence="1"/>
<dbReference type="EMBL" id="CP001164">
    <property type="protein sequence ID" value="ACI35997.1"/>
    <property type="molecule type" value="Genomic_DNA"/>
</dbReference>
<dbReference type="RefSeq" id="WP_000004459.1">
    <property type="nucleotide sequence ID" value="NC_011353.1"/>
</dbReference>
<dbReference type="SMR" id="B5YT07"/>
<dbReference type="GeneID" id="75173458"/>
<dbReference type="KEGG" id="ecf:ECH74115_4610"/>
<dbReference type="HOGENOM" id="CLU_033347_1_2_6"/>
<dbReference type="GO" id="GO:0005829">
    <property type="term" value="C:cytosol"/>
    <property type="evidence" value="ECO:0007669"/>
    <property type="project" value="TreeGrafter"/>
</dbReference>
<dbReference type="GO" id="GO:0004479">
    <property type="term" value="F:methionyl-tRNA formyltransferase activity"/>
    <property type="evidence" value="ECO:0007669"/>
    <property type="project" value="UniProtKB-UniRule"/>
</dbReference>
<dbReference type="CDD" id="cd08646">
    <property type="entry name" value="FMT_core_Met-tRNA-FMT_N"/>
    <property type="match status" value="1"/>
</dbReference>
<dbReference type="CDD" id="cd08704">
    <property type="entry name" value="Met_tRNA_FMT_C"/>
    <property type="match status" value="1"/>
</dbReference>
<dbReference type="FunFam" id="3.10.25.10:FF:000001">
    <property type="entry name" value="Methionyl-tRNA formyltransferase"/>
    <property type="match status" value="1"/>
</dbReference>
<dbReference type="FunFam" id="3.40.50.170:FF:000003">
    <property type="entry name" value="Methionyl-tRNA formyltransferase"/>
    <property type="match status" value="1"/>
</dbReference>
<dbReference type="Gene3D" id="3.10.25.10">
    <property type="entry name" value="Formyl transferase, C-terminal domain"/>
    <property type="match status" value="1"/>
</dbReference>
<dbReference type="Gene3D" id="3.40.50.170">
    <property type="entry name" value="Formyl transferase, N-terminal domain"/>
    <property type="match status" value="1"/>
</dbReference>
<dbReference type="HAMAP" id="MF_00182">
    <property type="entry name" value="Formyl_trans"/>
    <property type="match status" value="1"/>
</dbReference>
<dbReference type="InterPro" id="IPR005794">
    <property type="entry name" value="Fmt"/>
</dbReference>
<dbReference type="InterPro" id="IPR005793">
    <property type="entry name" value="Formyl_trans_C"/>
</dbReference>
<dbReference type="InterPro" id="IPR037022">
    <property type="entry name" value="Formyl_trans_C_sf"/>
</dbReference>
<dbReference type="InterPro" id="IPR002376">
    <property type="entry name" value="Formyl_transf_N"/>
</dbReference>
<dbReference type="InterPro" id="IPR036477">
    <property type="entry name" value="Formyl_transf_N_sf"/>
</dbReference>
<dbReference type="InterPro" id="IPR011034">
    <property type="entry name" value="Formyl_transferase-like_C_sf"/>
</dbReference>
<dbReference type="InterPro" id="IPR001555">
    <property type="entry name" value="GART_AS"/>
</dbReference>
<dbReference type="InterPro" id="IPR044135">
    <property type="entry name" value="Met-tRNA-FMT_C"/>
</dbReference>
<dbReference type="InterPro" id="IPR041711">
    <property type="entry name" value="Met-tRNA-FMT_N"/>
</dbReference>
<dbReference type="NCBIfam" id="TIGR00460">
    <property type="entry name" value="fmt"/>
    <property type="match status" value="1"/>
</dbReference>
<dbReference type="PANTHER" id="PTHR11138">
    <property type="entry name" value="METHIONYL-TRNA FORMYLTRANSFERASE"/>
    <property type="match status" value="1"/>
</dbReference>
<dbReference type="PANTHER" id="PTHR11138:SF5">
    <property type="entry name" value="METHIONYL-TRNA FORMYLTRANSFERASE, MITOCHONDRIAL"/>
    <property type="match status" value="1"/>
</dbReference>
<dbReference type="Pfam" id="PF02911">
    <property type="entry name" value="Formyl_trans_C"/>
    <property type="match status" value="1"/>
</dbReference>
<dbReference type="Pfam" id="PF00551">
    <property type="entry name" value="Formyl_trans_N"/>
    <property type="match status" value="1"/>
</dbReference>
<dbReference type="SUPFAM" id="SSF50486">
    <property type="entry name" value="FMT C-terminal domain-like"/>
    <property type="match status" value="1"/>
</dbReference>
<dbReference type="SUPFAM" id="SSF53328">
    <property type="entry name" value="Formyltransferase"/>
    <property type="match status" value="1"/>
</dbReference>
<dbReference type="PROSITE" id="PS00373">
    <property type="entry name" value="GART"/>
    <property type="match status" value="1"/>
</dbReference>
<feature type="chain" id="PRO_1000098400" description="Methionyl-tRNA formyltransferase">
    <location>
        <begin position="1"/>
        <end position="315"/>
    </location>
</feature>
<feature type="binding site" evidence="1">
    <location>
        <begin position="113"/>
        <end position="116"/>
    </location>
    <ligand>
        <name>(6S)-5,6,7,8-tetrahydrofolate</name>
        <dbReference type="ChEBI" id="CHEBI:57453"/>
    </ligand>
</feature>
<name>FMT_ECO5E</name>
<reference key="1">
    <citation type="journal article" date="2011" name="Proc. Natl. Acad. Sci. U.S.A.">
        <title>Genomic anatomy of Escherichia coli O157:H7 outbreaks.</title>
        <authorList>
            <person name="Eppinger M."/>
            <person name="Mammel M.K."/>
            <person name="Leclerc J.E."/>
            <person name="Ravel J."/>
            <person name="Cebula T.A."/>
        </authorList>
    </citation>
    <scope>NUCLEOTIDE SEQUENCE [LARGE SCALE GENOMIC DNA]</scope>
    <source>
        <strain>EC4115 / EHEC</strain>
    </source>
</reference>
<organism>
    <name type="scientific">Escherichia coli O157:H7 (strain EC4115 / EHEC)</name>
    <dbReference type="NCBI Taxonomy" id="444450"/>
    <lineage>
        <taxon>Bacteria</taxon>
        <taxon>Pseudomonadati</taxon>
        <taxon>Pseudomonadota</taxon>
        <taxon>Gammaproteobacteria</taxon>
        <taxon>Enterobacterales</taxon>
        <taxon>Enterobacteriaceae</taxon>
        <taxon>Escherichia</taxon>
    </lineage>
</organism>
<gene>
    <name evidence="1" type="primary">fmt</name>
    <name type="ordered locus">ECH74115_4610</name>
</gene>